<organism>
    <name type="scientific">Bacillus subtilis</name>
    <dbReference type="NCBI Taxonomy" id="1423"/>
    <lineage>
        <taxon>Bacteria</taxon>
        <taxon>Bacillati</taxon>
        <taxon>Bacillota</taxon>
        <taxon>Bacilli</taxon>
        <taxon>Bacillales</taxon>
        <taxon>Bacillaceae</taxon>
        <taxon>Bacillus</taxon>
    </lineage>
</organism>
<proteinExistence type="evidence at protein level"/>
<name>FENF_BACIU</name>
<keyword id="KW-0012">Acyltransferase</keyword>
<keyword id="KW-0275">Fatty acid biosynthesis</keyword>
<keyword id="KW-0276">Fatty acid metabolism</keyword>
<keyword id="KW-0444">Lipid biosynthesis</keyword>
<keyword id="KW-0443">Lipid metabolism</keyword>
<keyword id="KW-0808">Transferase</keyword>
<evidence type="ECO:0000250" key="1"/>
<evidence type="ECO:0000269" key="2">
    <source>
    </source>
</evidence>
<evidence type="ECO:0000305" key="3"/>
<accession>Q9R9J2</accession>
<protein>
    <recommendedName>
        <fullName>Malonyl CoA-acyl carrier protein transacylase</fullName>
        <shortName>MCT</shortName>
        <ecNumber>2.3.1.39</ecNumber>
    </recommendedName>
</protein>
<comment type="function">
    <text evidence="2">Is involved in the mycosubtilin synthetase assembly, by catalyzing the transfer of malonyl groups to a specific acyl-carrier-protein domain on MycA.</text>
</comment>
<comment type="catalytic activity">
    <reaction evidence="2">
        <text>holo-[ACP] + malonyl-CoA = malonyl-[ACP] + CoA</text>
        <dbReference type="Rhea" id="RHEA:41792"/>
        <dbReference type="Rhea" id="RHEA-COMP:9623"/>
        <dbReference type="Rhea" id="RHEA-COMP:9685"/>
        <dbReference type="ChEBI" id="CHEBI:57287"/>
        <dbReference type="ChEBI" id="CHEBI:57384"/>
        <dbReference type="ChEBI" id="CHEBI:64479"/>
        <dbReference type="ChEBI" id="CHEBI:78449"/>
        <dbReference type="EC" id="2.3.1.39"/>
    </reaction>
</comment>
<comment type="biophysicochemical properties">
    <kinetics>
        <KM evidence="2">45 uM for malonyl-CoA</KM>
        <KM evidence="2">950 uM for acyl-carrier-protein domain of MycA</KM>
    </kinetics>
</comment>
<comment type="similarity">
    <text evidence="3">Belongs to the FabD family.</text>
</comment>
<reference key="1">
    <citation type="journal article" date="1999" name="Proc. Natl. Acad. Sci. U.S.A.">
        <title>The mycosubtilin synthetase of Bacillus subtilis ATCC6633: a multifunctional hybrid between a peptide synthetase, an amino transferase, and a fatty acid synthase.</title>
        <authorList>
            <person name="Duitman E.H."/>
            <person name="Hamoen L.W."/>
            <person name="Rembold M."/>
            <person name="Venema G."/>
            <person name="Seitz H."/>
            <person name="Saenger W."/>
            <person name="Bernhard F."/>
            <person name="Reinhardt R."/>
            <person name="Schmidt M."/>
            <person name="Ullrich C."/>
            <person name="Stein T."/>
            <person name="Leenders F."/>
            <person name="Vater J."/>
        </authorList>
    </citation>
    <scope>NUCLEOTIDE SEQUENCE [GENOMIC DNA]</scope>
    <source>
        <strain>ATCC 6633 / DSM 347 / IFO 3134 / PCI 219 / NRS 231</strain>
    </source>
</reference>
<reference key="2">
    <citation type="journal article" date="2007" name="ChemBioChem">
        <title>FenF: servicing the mycosubtilin synthetase assembly line in trans.</title>
        <authorList>
            <person name="Aron Z.D."/>
            <person name="Fortin P.D."/>
            <person name="Calderone C.T."/>
            <person name="Walsh C.T."/>
        </authorList>
    </citation>
    <scope>CATALYTIC ACTIVITY</scope>
    <scope>FUNCTION</scope>
    <scope>BIOPHYSICOCHEMICAL PROPERTIES</scope>
    <source>
        <strain>ATCC 6633 / DSM 347 / IFO 3134 / PCI 219 / NRS 231</strain>
    </source>
</reference>
<dbReference type="EC" id="2.3.1.39"/>
<dbReference type="EMBL" id="AF184956">
    <property type="protein sequence ID" value="AAF08794.1"/>
    <property type="molecule type" value="Genomic_DNA"/>
</dbReference>
<dbReference type="PIR" id="T44805">
    <property type="entry name" value="T44805"/>
</dbReference>
<dbReference type="SMR" id="Q9R9J2"/>
<dbReference type="STRING" id="483913.AN935_09475"/>
<dbReference type="PATRIC" id="fig|1423.172.peg.141"/>
<dbReference type="SABIO-RK" id="Q9R9J2"/>
<dbReference type="GO" id="GO:0004314">
    <property type="term" value="F:[acyl-carrier-protein] S-malonyltransferase activity"/>
    <property type="evidence" value="ECO:0007669"/>
    <property type="project" value="UniProtKB-EC"/>
</dbReference>
<dbReference type="GO" id="GO:0006633">
    <property type="term" value="P:fatty acid biosynthetic process"/>
    <property type="evidence" value="ECO:0007669"/>
    <property type="project" value="UniProtKB-KW"/>
</dbReference>
<dbReference type="Gene3D" id="3.30.70.250">
    <property type="entry name" value="Malonyl-CoA ACP transacylase, ACP-binding"/>
    <property type="match status" value="1"/>
</dbReference>
<dbReference type="Gene3D" id="3.40.366.10">
    <property type="entry name" value="Malonyl-Coenzyme A Acyl Carrier Protein, domain 2"/>
    <property type="match status" value="1"/>
</dbReference>
<dbReference type="InterPro" id="IPR001227">
    <property type="entry name" value="Ac_transferase_dom_sf"/>
</dbReference>
<dbReference type="InterPro" id="IPR014043">
    <property type="entry name" value="Acyl_transferase_dom"/>
</dbReference>
<dbReference type="InterPro" id="IPR016035">
    <property type="entry name" value="Acyl_Trfase/lysoPLipase"/>
</dbReference>
<dbReference type="InterPro" id="IPR050858">
    <property type="entry name" value="Mal-CoA-ACP_Trans/PKS_FabD"/>
</dbReference>
<dbReference type="InterPro" id="IPR004410">
    <property type="entry name" value="Malonyl_CoA-ACP_transAc_FabD"/>
</dbReference>
<dbReference type="InterPro" id="IPR016036">
    <property type="entry name" value="Malonyl_transacylase_ACP-bd"/>
</dbReference>
<dbReference type="NCBIfam" id="TIGR00128">
    <property type="entry name" value="fabD"/>
    <property type="match status" value="1"/>
</dbReference>
<dbReference type="PANTHER" id="PTHR42681">
    <property type="entry name" value="MALONYL-COA-ACYL CARRIER PROTEIN TRANSACYLASE, MITOCHONDRIAL"/>
    <property type="match status" value="1"/>
</dbReference>
<dbReference type="PANTHER" id="PTHR42681:SF1">
    <property type="entry name" value="MALONYL-COA-ACYL CARRIER PROTEIN TRANSACYLASE, MITOCHONDRIAL"/>
    <property type="match status" value="1"/>
</dbReference>
<dbReference type="Pfam" id="PF00698">
    <property type="entry name" value="Acyl_transf_1"/>
    <property type="match status" value="1"/>
</dbReference>
<dbReference type="SMART" id="SM00827">
    <property type="entry name" value="PKS_AT"/>
    <property type="match status" value="1"/>
</dbReference>
<dbReference type="SUPFAM" id="SSF52151">
    <property type="entry name" value="FabD/lysophospholipase-like"/>
    <property type="match status" value="1"/>
</dbReference>
<dbReference type="SUPFAM" id="SSF55048">
    <property type="entry name" value="Probable ACP-binding domain of malonyl-CoA ACP transacylase"/>
    <property type="match status" value="1"/>
</dbReference>
<sequence>MNNLAFLFPGQGSQFVGMGKSFWNDFVLAKRLFEEASDAISMDVKKLCFDGDMTELTRTMNAQPAILTVSVIAYQVYMQEIGIKPHFLAGHSLGEYSALVCAGVLSFQEAVKLIRQRGILMQNADPEQLGTMAAITQVYIQPLQDLCTEISTEDFPVGVACMNSDQQHVISGHRQAVEFVIKKAERMGANHTYLNVSAPFHSSMMRSASEQFQTALNQYSFRDAEWPIISNVTAIPYNNGHSVREHLQTHMTMPVRWAESMHYLLLHGVTEVIEMGPKNVLVGLLKKITNHIAAYPLGQTSDLHLLSDSAERNENIVNLRKKQLNKMMIQSIIARNYNKDAKTYSNLTTPLFPQIQLLKERVERKEVELSAEELEHSIHLCQLICEAKQLPTWEQLRILK</sequence>
<gene>
    <name type="primary">fenF</name>
</gene>
<feature type="chain" id="PRO_0000385454" description="Malonyl CoA-acyl carrier protein transacylase">
    <location>
        <begin position="1"/>
        <end position="400"/>
    </location>
</feature>
<feature type="active site" evidence="1">
    <location>
        <position position="92"/>
    </location>
</feature>
<feature type="active site" evidence="1">
    <location>
        <position position="201"/>
    </location>
</feature>